<keyword id="KW-0009">Actin-binding</keyword>
<keyword id="KW-0963">Cytoplasm</keyword>
<keyword id="KW-0206">Cytoskeleton</keyword>
<keyword id="KW-0597">Phosphoprotein</keyword>
<keyword id="KW-1185">Reference proteome</keyword>
<dbReference type="EMBL" id="AL022197">
    <property type="protein sequence ID" value="CAA18167.1"/>
    <property type="status" value="ALT_SEQ"/>
    <property type="molecule type" value="Genomic_DNA"/>
</dbReference>
<dbReference type="EMBL" id="AL161563">
    <property type="protein sequence ID" value="CAB81369.1"/>
    <property type="status" value="ALT_SEQ"/>
    <property type="molecule type" value="Genomic_DNA"/>
</dbReference>
<dbReference type="EMBL" id="CP002687">
    <property type="protein sequence ID" value="AEE85080.1"/>
    <property type="molecule type" value="Genomic_DNA"/>
</dbReference>
<dbReference type="EMBL" id="AK176093">
    <property type="protein sequence ID" value="BAD43856.1"/>
    <property type="molecule type" value="mRNA"/>
</dbReference>
<dbReference type="EMBL" id="BT010513">
    <property type="protein sequence ID" value="AAQ65136.1"/>
    <property type="molecule type" value="mRNA"/>
</dbReference>
<dbReference type="PIR" id="T05788">
    <property type="entry name" value="T05788"/>
</dbReference>
<dbReference type="RefSeq" id="NP_001329121.1">
    <property type="nucleotide sequence ID" value="NM_001341753.1"/>
</dbReference>
<dbReference type="RefSeq" id="NP_194289.2">
    <property type="nucleotide sequence ID" value="NM_118691.3"/>
</dbReference>
<dbReference type="SMR" id="Q67ZM4"/>
<dbReference type="FunCoup" id="Q67ZM4">
    <property type="interactions" value="2544"/>
</dbReference>
<dbReference type="STRING" id="3702.Q67ZM4"/>
<dbReference type="PaxDb" id="3702-AT4G25590.1"/>
<dbReference type="ProteomicsDB" id="244817"/>
<dbReference type="EnsemblPlants" id="AT4G25590.1">
    <property type="protein sequence ID" value="AT4G25590.1"/>
    <property type="gene ID" value="AT4G25590"/>
</dbReference>
<dbReference type="GeneID" id="828664"/>
<dbReference type="Gramene" id="AT4G25590.1">
    <property type="protein sequence ID" value="AT4G25590.1"/>
    <property type="gene ID" value="AT4G25590"/>
</dbReference>
<dbReference type="KEGG" id="ath:AT4G25590"/>
<dbReference type="Araport" id="AT4G25590"/>
<dbReference type="TAIR" id="AT4G25590">
    <property type="gene designation" value="ADF7"/>
</dbReference>
<dbReference type="eggNOG" id="KOG1735">
    <property type="taxonomic scope" value="Eukaryota"/>
</dbReference>
<dbReference type="HOGENOM" id="CLU_094004_2_2_1"/>
<dbReference type="InParanoid" id="Q67ZM4"/>
<dbReference type="OMA" id="LKLCMLY"/>
<dbReference type="OrthoDB" id="10249245at2759"/>
<dbReference type="PhylomeDB" id="Q67ZM4"/>
<dbReference type="PRO" id="PR:Q67ZM4"/>
<dbReference type="Proteomes" id="UP000006548">
    <property type="component" value="Chromosome 4"/>
</dbReference>
<dbReference type="ExpressionAtlas" id="Q67ZM4">
    <property type="expression patterns" value="baseline and differential"/>
</dbReference>
<dbReference type="GO" id="GO:0005884">
    <property type="term" value="C:actin filament"/>
    <property type="evidence" value="ECO:0000314"/>
    <property type="project" value="TAIR"/>
</dbReference>
<dbReference type="GO" id="GO:0005737">
    <property type="term" value="C:cytoplasm"/>
    <property type="evidence" value="ECO:0007669"/>
    <property type="project" value="UniProtKB-KW"/>
</dbReference>
<dbReference type="GO" id="GO:0003779">
    <property type="term" value="F:actin binding"/>
    <property type="evidence" value="ECO:0007669"/>
    <property type="project" value="UniProtKB-KW"/>
</dbReference>
<dbReference type="GO" id="GO:0030042">
    <property type="term" value="P:actin filament depolymerization"/>
    <property type="evidence" value="ECO:0000314"/>
    <property type="project" value="TAIR"/>
</dbReference>
<dbReference type="CDD" id="cd11286">
    <property type="entry name" value="ADF_cofilin_like"/>
    <property type="match status" value="1"/>
</dbReference>
<dbReference type="FunFam" id="3.40.20.10:FF:000025">
    <property type="entry name" value="Actin-depolymerizing factor 2"/>
    <property type="match status" value="1"/>
</dbReference>
<dbReference type="Gene3D" id="3.40.20.10">
    <property type="entry name" value="Severin"/>
    <property type="match status" value="1"/>
</dbReference>
<dbReference type="InterPro" id="IPR002108">
    <property type="entry name" value="ADF-H"/>
</dbReference>
<dbReference type="InterPro" id="IPR029006">
    <property type="entry name" value="ADF-H/Gelsolin-like_dom_sf"/>
</dbReference>
<dbReference type="InterPro" id="IPR017904">
    <property type="entry name" value="ADF/Cofilin"/>
</dbReference>
<dbReference type="PANTHER" id="PTHR11913">
    <property type="entry name" value="COFILIN-RELATED"/>
    <property type="match status" value="1"/>
</dbReference>
<dbReference type="Pfam" id="PF00241">
    <property type="entry name" value="Cofilin_ADF"/>
    <property type="match status" value="1"/>
</dbReference>
<dbReference type="SMART" id="SM00102">
    <property type="entry name" value="ADF"/>
    <property type="match status" value="1"/>
</dbReference>
<dbReference type="SUPFAM" id="SSF55753">
    <property type="entry name" value="Actin depolymerizing proteins"/>
    <property type="match status" value="1"/>
</dbReference>
<dbReference type="PROSITE" id="PS51263">
    <property type="entry name" value="ADF_H"/>
    <property type="match status" value="1"/>
</dbReference>
<proteinExistence type="evidence at transcript level"/>
<comment type="function">
    <text evidence="4">Actin-depolymerizing protein. Severs actin filaments (F-actin) and binds to actin monomers. Binds monomeric actin (G-actin) with a marked preference for the ADP-loaded form and inhibits the rate of nucleotide exchange on G-actin. Required for pollen tube growth. Promotes turnover of longitudinal actin cables by severing actin filaments in pollen tubes.</text>
</comment>
<comment type="subcellular location">
    <subcellularLocation>
        <location evidence="3 4">Cytoplasm</location>
        <location evidence="3 4">Cytoskeleton</location>
    </subcellularLocation>
    <text evidence="3 4">In germinating pollen grains and elongating pollen tubes, associates with the subapical actin fringe (PubMed:21632657). Associates with actin cables in the shanks of pollen tubes (PubMed:24058157).</text>
</comment>
<comment type="tissue specificity">
    <text evidence="3">Specifically expressed in pollen.</text>
</comment>
<comment type="developmental stage">
    <text evidence="3">During male gametophyte development, expressed at the early microspore stage just after tetrad separation, polarized microspore stage, bicellular stage, mature pollen stage, anthesis stage and open flower stage. Expressed in germinating pollen grains and elongating pollen tubes.</text>
</comment>
<comment type="disruption phenotype">
    <text evidence="4">Decreased actin filament severing frequency. Increased amount of filamentous actin and inhibition of pollen tube growth.</text>
</comment>
<comment type="similarity">
    <text evidence="5">Belongs to the actin-binding proteins ADF family.</text>
</comment>
<comment type="sequence caution" evidence="5">
    <conflict type="erroneous gene model prediction">
        <sequence resource="EMBL-CDS" id="CAA18167"/>
    </conflict>
</comment>
<comment type="sequence caution" evidence="5">
    <conflict type="erroneous gene model prediction">
        <sequence resource="EMBL-CDS" id="CAB81369"/>
    </conflict>
</comment>
<accession>Q67ZM4</accession>
<accession>O65603</accession>
<accession>Q7FEI4</accession>
<organism>
    <name type="scientific">Arabidopsis thaliana</name>
    <name type="common">Mouse-ear cress</name>
    <dbReference type="NCBI Taxonomy" id="3702"/>
    <lineage>
        <taxon>Eukaryota</taxon>
        <taxon>Viridiplantae</taxon>
        <taxon>Streptophyta</taxon>
        <taxon>Embryophyta</taxon>
        <taxon>Tracheophyta</taxon>
        <taxon>Spermatophyta</taxon>
        <taxon>Magnoliopsida</taxon>
        <taxon>eudicotyledons</taxon>
        <taxon>Gunneridae</taxon>
        <taxon>Pentapetalae</taxon>
        <taxon>rosids</taxon>
        <taxon>malvids</taxon>
        <taxon>Brassicales</taxon>
        <taxon>Brassicaceae</taxon>
        <taxon>Camelineae</taxon>
        <taxon>Arabidopsis</taxon>
    </lineage>
</organism>
<reference key="1">
    <citation type="journal article" date="1999" name="Nature">
        <title>Sequence and analysis of chromosome 4 of the plant Arabidopsis thaliana.</title>
        <authorList>
            <person name="Mayer K.F.X."/>
            <person name="Schueller C."/>
            <person name="Wambutt R."/>
            <person name="Murphy G."/>
            <person name="Volckaert G."/>
            <person name="Pohl T."/>
            <person name="Duesterhoeft A."/>
            <person name="Stiekema W."/>
            <person name="Entian K.-D."/>
            <person name="Terryn N."/>
            <person name="Harris B."/>
            <person name="Ansorge W."/>
            <person name="Brandt P."/>
            <person name="Grivell L.A."/>
            <person name="Rieger M."/>
            <person name="Weichselgartner M."/>
            <person name="de Simone V."/>
            <person name="Obermaier B."/>
            <person name="Mache R."/>
            <person name="Mueller M."/>
            <person name="Kreis M."/>
            <person name="Delseny M."/>
            <person name="Puigdomenech P."/>
            <person name="Watson M."/>
            <person name="Schmidtheini T."/>
            <person name="Reichert B."/>
            <person name="Portetelle D."/>
            <person name="Perez-Alonso M."/>
            <person name="Boutry M."/>
            <person name="Bancroft I."/>
            <person name="Vos P."/>
            <person name="Hoheisel J."/>
            <person name="Zimmermann W."/>
            <person name="Wedler H."/>
            <person name="Ridley P."/>
            <person name="Langham S.-A."/>
            <person name="McCullagh B."/>
            <person name="Bilham L."/>
            <person name="Robben J."/>
            <person name="van der Schueren J."/>
            <person name="Grymonprez B."/>
            <person name="Chuang Y.-J."/>
            <person name="Vandenbussche F."/>
            <person name="Braeken M."/>
            <person name="Weltjens I."/>
            <person name="Voet M."/>
            <person name="Bastiaens I."/>
            <person name="Aert R."/>
            <person name="Defoor E."/>
            <person name="Weitzenegger T."/>
            <person name="Bothe G."/>
            <person name="Ramsperger U."/>
            <person name="Hilbert H."/>
            <person name="Braun M."/>
            <person name="Holzer E."/>
            <person name="Brandt A."/>
            <person name="Peters S."/>
            <person name="van Staveren M."/>
            <person name="Dirkse W."/>
            <person name="Mooijman P."/>
            <person name="Klein Lankhorst R."/>
            <person name="Rose M."/>
            <person name="Hauf J."/>
            <person name="Koetter P."/>
            <person name="Berneiser S."/>
            <person name="Hempel S."/>
            <person name="Feldpausch M."/>
            <person name="Lamberth S."/>
            <person name="Van den Daele H."/>
            <person name="De Keyser A."/>
            <person name="Buysshaert C."/>
            <person name="Gielen J."/>
            <person name="Villarroel R."/>
            <person name="De Clercq R."/>
            <person name="van Montagu M."/>
            <person name="Rogers J."/>
            <person name="Cronin A."/>
            <person name="Quail M.A."/>
            <person name="Bray-Allen S."/>
            <person name="Clark L."/>
            <person name="Doggett J."/>
            <person name="Hall S."/>
            <person name="Kay M."/>
            <person name="Lennard N."/>
            <person name="McLay K."/>
            <person name="Mayes R."/>
            <person name="Pettett A."/>
            <person name="Rajandream M.A."/>
            <person name="Lyne M."/>
            <person name="Benes V."/>
            <person name="Rechmann S."/>
            <person name="Borkova D."/>
            <person name="Bloecker H."/>
            <person name="Scharfe M."/>
            <person name="Grimm M."/>
            <person name="Loehnert T.-H."/>
            <person name="Dose S."/>
            <person name="de Haan M."/>
            <person name="Maarse A.C."/>
            <person name="Schaefer M."/>
            <person name="Mueller-Auer S."/>
            <person name="Gabel C."/>
            <person name="Fuchs M."/>
            <person name="Fartmann B."/>
            <person name="Granderath K."/>
            <person name="Dauner D."/>
            <person name="Herzl A."/>
            <person name="Neumann S."/>
            <person name="Argiriou A."/>
            <person name="Vitale D."/>
            <person name="Liguori R."/>
            <person name="Piravandi E."/>
            <person name="Massenet O."/>
            <person name="Quigley F."/>
            <person name="Clabauld G."/>
            <person name="Muendlein A."/>
            <person name="Felber R."/>
            <person name="Schnabl S."/>
            <person name="Hiller R."/>
            <person name="Schmidt W."/>
            <person name="Lecharny A."/>
            <person name="Aubourg S."/>
            <person name="Chefdor F."/>
            <person name="Cooke R."/>
            <person name="Berger C."/>
            <person name="Monfort A."/>
            <person name="Casacuberta E."/>
            <person name="Gibbons T."/>
            <person name="Weber N."/>
            <person name="Vandenbol M."/>
            <person name="Bargues M."/>
            <person name="Terol J."/>
            <person name="Torres A."/>
            <person name="Perez-Perez A."/>
            <person name="Purnelle B."/>
            <person name="Bent E."/>
            <person name="Johnson S."/>
            <person name="Tacon D."/>
            <person name="Jesse T."/>
            <person name="Heijnen L."/>
            <person name="Schwarz S."/>
            <person name="Scholler P."/>
            <person name="Heber S."/>
            <person name="Francs P."/>
            <person name="Bielke C."/>
            <person name="Frishman D."/>
            <person name="Haase D."/>
            <person name="Lemcke K."/>
            <person name="Mewes H.-W."/>
            <person name="Stocker S."/>
            <person name="Zaccaria P."/>
            <person name="Bevan M."/>
            <person name="Wilson R.K."/>
            <person name="de la Bastide M."/>
            <person name="Habermann K."/>
            <person name="Parnell L."/>
            <person name="Dedhia N."/>
            <person name="Gnoj L."/>
            <person name="Schutz K."/>
            <person name="Huang E."/>
            <person name="Spiegel L."/>
            <person name="Sekhon M."/>
            <person name="Murray J."/>
            <person name="Sheet P."/>
            <person name="Cordes M."/>
            <person name="Abu-Threideh J."/>
            <person name="Stoneking T."/>
            <person name="Kalicki J."/>
            <person name="Graves T."/>
            <person name="Harmon G."/>
            <person name="Edwards J."/>
            <person name="Latreille P."/>
            <person name="Courtney L."/>
            <person name="Cloud J."/>
            <person name="Abbott A."/>
            <person name="Scott K."/>
            <person name="Johnson D."/>
            <person name="Minx P."/>
            <person name="Bentley D."/>
            <person name="Fulton B."/>
            <person name="Miller N."/>
            <person name="Greco T."/>
            <person name="Kemp K."/>
            <person name="Kramer J."/>
            <person name="Fulton L."/>
            <person name="Mardis E."/>
            <person name="Dante M."/>
            <person name="Pepin K."/>
            <person name="Hillier L.W."/>
            <person name="Nelson J."/>
            <person name="Spieth J."/>
            <person name="Ryan E."/>
            <person name="Andrews S."/>
            <person name="Geisel C."/>
            <person name="Layman D."/>
            <person name="Du H."/>
            <person name="Ali J."/>
            <person name="Berghoff A."/>
            <person name="Jones K."/>
            <person name="Drone K."/>
            <person name="Cotton M."/>
            <person name="Joshu C."/>
            <person name="Antonoiu B."/>
            <person name="Zidanic M."/>
            <person name="Strong C."/>
            <person name="Sun H."/>
            <person name="Lamar B."/>
            <person name="Yordan C."/>
            <person name="Ma P."/>
            <person name="Zhong J."/>
            <person name="Preston R."/>
            <person name="Vil D."/>
            <person name="Shekher M."/>
            <person name="Matero A."/>
            <person name="Shah R."/>
            <person name="Swaby I.K."/>
            <person name="O'Shaughnessy A."/>
            <person name="Rodriguez M."/>
            <person name="Hoffman J."/>
            <person name="Till S."/>
            <person name="Granat S."/>
            <person name="Shohdy N."/>
            <person name="Hasegawa A."/>
            <person name="Hameed A."/>
            <person name="Lodhi M."/>
            <person name="Johnson A."/>
            <person name="Chen E."/>
            <person name="Marra M.A."/>
            <person name="Martienssen R."/>
            <person name="McCombie W.R."/>
        </authorList>
    </citation>
    <scope>NUCLEOTIDE SEQUENCE [LARGE SCALE GENOMIC DNA]</scope>
    <source>
        <strain>cv. Columbia</strain>
    </source>
</reference>
<reference key="2">
    <citation type="journal article" date="2017" name="Plant J.">
        <title>Araport11: a complete reannotation of the Arabidopsis thaliana reference genome.</title>
        <authorList>
            <person name="Cheng C.Y."/>
            <person name="Krishnakumar V."/>
            <person name="Chan A.P."/>
            <person name="Thibaud-Nissen F."/>
            <person name="Schobel S."/>
            <person name="Town C.D."/>
        </authorList>
    </citation>
    <scope>GENOME REANNOTATION</scope>
    <source>
        <strain>cv. Columbia</strain>
    </source>
</reference>
<reference key="3">
    <citation type="submission" date="2004-09" db="EMBL/GenBank/DDBJ databases">
        <title>Large-scale analysis of RIKEN Arabidopsis full-length (RAFL) cDNAs.</title>
        <authorList>
            <person name="Totoki Y."/>
            <person name="Seki M."/>
            <person name="Ishida J."/>
            <person name="Nakajima M."/>
            <person name="Enju A."/>
            <person name="Kamiya A."/>
            <person name="Narusaka M."/>
            <person name="Shin-i T."/>
            <person name="Nakagawa M."/>
            <person name="Sakamoto N."/>
            <person name="Oishi K."/>
            <person name="Kohara Y."/>
            <person name="Kobayashi M."/>
            <person name="Toyoda A."/>
            <person name="Sakaki Y."/>
            <person name="Sakurai T."/>
            <person name="Iida K."/>
            <person name="Akiyama K."/>
            <person name="Satou M."/>
            <person name="Toyoda T."/>
            <person name="Konagaya A."/>
            <person name="Carninci P."/>
            <person name="Kawai J."/>
            <person name="Hayashizaki Y."/>
            <person name="Shinozaki K."/>
        </authorList>
    </citation>
    <scope>NUCLEOTIDE SEQUENCE [LARGE SCALE MRNA]</scope>
    <source>
        <strain>cv. Columbia</strain>
    </source>
</reference>
<reference key="4">
    <citation type="journal article" date="2003" name="Science">
        <title>Empirical analysis of transcriptional activity in the Arabidopsis genome.</title>
        <authorList>
            <person name="Yamada K."/>
            <person name="Lim J."/>
            <person name="Dale J.M."/>
            <person name="Chen H."/>
            <person name="Shinn P."/>
            <person name="Palm C.J."/>
            <person name="Southwick A.M."/>
            <person name="Wu H.C."/>
            <person name="Kim C.J."/>
            <person name="Nguyen M."/>
            <person name="Pham P.K."/>
            <person name="Cheuk R.F."/>
            <person name="Karlin-Newmann G."/>
            <person name="Liu S.X."/>
            <person name="Lam B."/>
            <person name="Sakano H."/>
            <person name="Wu T."/>
            <person name="Yu G."/>
            <person name="Miranda M."/>
            <person name="Quach H.L."/>
            <person name="Tripp M."/>
            <person name="Chang C.H."/>
            <person name="Lee J.M."/>
            <person name="Toriumi M.J."/>
            <person name="Chan M.M."/>
            <person name="Tang C.C."/>
            <person name="Onodera C.S."/>
            <person name="Deng J.M."/>
            <person name="Akiyama K."/>
            <person name="Ansari Y."/>
            <person name="Arakawa T."/>
            <person name="Banh J."/>
            <person name="Banno F."/>
            <person name="Bowser L."/>
            <person name="Brooks S.Y."/>
            <person name="Carninci P."/>
            <person name="Chao Q."/>
            <person name="Choy N."/>
            <person name="Enju A."/>
            <person name="Goldsmith A.D."/>
            <person name="Gurjal M."/>
            <person name="Hansen N.F."/>
            <person name="Hayashizaki Y."/>
            <person name="Johnson-Hopson C."/>
            <person name="Hsuan V.W."/>
            <person name="Iida K."/>
            <person name="Karnes M."/>
            <person name="Khan S."/>
            <person name="Koesema E."/>
            <person name="Ishida J."/>
            <person name="Jiang P.X."/>
            <person name="Jones T."/>
            <person name="Kawai J."/>
            <person name="Kamiya A."/>
            <person name="Meyers C."/>
            <person name="Nakajima M."/>
            <person name="Narusaka M."/>
            <person name="Seki M."/>
            <person name="Sakurai T."/>
            <person name="Satou M."/>
            <person name="Tamse R."/>
            <person name="Vaysberg M."/>
            <person name="Wallender E.K."/>
            <person name="Wong C."/>
            <person name="Yamamura Y."/>
            <person name="Yuan S."/>
            <person name="Shinozaki K."/>
            <person name="Davis R.W."/>
            <person name="Theologis A."/>
            <person name="Ecker J.R."/>
        </authorList>
    </citation>
    <scope>NUCLEOTIDE SEQUENCE [LARGE SCALE MRNA] OF 8-137</scope>
    <source>
        <strain>cv. Columbia</strain>
    </source>
</reference>
<reference key="5">
    <citation type="journal article" date="2006" name="J. Plant Physiol.">
        <title>Comparative study of rice and Arabidopsis actin-depolymerizing factors gene families.</title>
        <authorList>
            <person name="Feng Y."/>
            <person name="Liu Q."/>
            <person name="Xue Q."/>
        </authorList>
    </citation>
    <scope>GENE FAMILY</scope>
</reference>
<reference key="6">
    <citation type="journal article" date="2011" name="Plant Cell Physiol.">
        <title>Spatial and temporal expression of actin depolymerizing factors ADF7 and ADF10 during male gametophyte development in Arabidopsis thaliana.</title>
        <authorList>
            <person name="Bou Daher F."/>
            <person name="van Oostende C."/>
            <person name="Geitmann A."/>
        </authorList>
    </citation>
    <scope>SUBCELLULAR LOCATION</scope>
    <scope>TISSUE SPECIFICITY</scope>
    <scope>DEVELOPMENTAL STAGE</scope>
</reference>
<reference key="7">
    <citation type="journal article" date="2013" name="Plant Cell">
        <title>Arabidopsis actin-depolymerizing factor7 severs actin filaments and regulates actin cable turnover to promote normal pollen tube growth.</title>
        <authorList>
            <person name="Zheng Y."/>
            <person name="Xie Y."/>
            <person name="Jiang Y."/>
            <person name="Qu X."/>
            <person name="Huang S."/>
        </authorList>
    </citation>
    <scope>FUNCTION</scope>
    <scope>SUBCELLULAR LOCATION</scope>
    <scope>DISRUPTION PHENOTYPE</scope>
</reference>
<feature type="chain" id="PRO_0000278099" description="Actin-depolymerizing factor 7">
    <location>
        <begin position="1"/>
        <end position="137"/>
    </location>
</feature>
<feature type="domain" description="ADF-H" evidence="2">
    <location>
        <begin position="7"/>
        <end position="137"/>
    </location>
</feature>
<feature type="modified residue" description="Phosphoserine" evidence="1">
    <location>
        <position position="6"/>
    </location>
</feature>
<gene>
    <name type="primary">ADF7</name>
    <name type="ordered locus">At4g25590</name>
    <name type="ORF">M7J2.40</name>
</gene>
<name>ADF7_ARATH</name>
<protein>
    <recommendedName>
        <fullName>Actin-depolymerizing factor 7</fullName>
        <shortName>ADF-7</shortName>
        <shortName>AtADF7</shortName>
    </recommendedName>
</protein>
<sequence length="137" mass="15820">MANAASGMAVEDECKLKFLELKSKRNYRFIIFRIDGQQVVVEKLGNPDETYDDFTASLPANECRYAVFDFDFITDENCQKSKIFFIAWSPDSSRVRMKMVYASSKDRFKRELDGIQVELQATDPSEMSFDIIKSRAL</sequence>
<evidence type="ECO:0000250" key="1">
    <source>
        <dbReference type="UniProtKB" id="Q39250"/>
    </source>
</evidence>
<evidence type="ECO:0000255" key="2">
    <source>
        <dbReference type="PROSITE-ProRule" id="PRU00599"/>
    </source>
</evidence>
<evidence type="ECO:0000269" key="3">
    <source>
    </source>
</evidence>
<evidence type="ECO:0000269" key="4">
    <source>
    </source>
</evidence>
<evidence type="ECO:0000305" key="5"/>